<evidence type="ECO:0000255" key="1">
    <source>
        <dbReference type="HAMAP-Rule" id="MF_01351"/>
    </source>
</evidence>
<dbReference type="EC" id="7.1.1.-" evidence="1"/>
<dbReference type="EMBL" id="CP000283">
    <property type="protein sequence ID" value="ABE40105.1"/>
    <property type="molecule type" value="Genomic_DNA"/>
</dbReference>
<dbReference type="SMR" id="Q135Y4"/>
<dbReference type="STRING" id="316057.RPD_2877"/>
<dbReference type="KEGG" id="rpd:RPD_2877"/>
<dbReference type="eggNOG" id="COG1143">
    <property type="taxonomic scope" value="Bacteria"/>
</dbReference>
<dbReference type="HOGENOM" id="CLU_067218_5_1_5"/>
<dbReference type="BioCyc" id="RPAL316057:RPD_RS14455-MONOMER"/>
<dbReference type="Proteomes" id="UP000001818">
    <property type="component" value="Chromosome"/>
</dbReference>
<dbReference type="GO" id="GO:0005886">
    <property type="term" value="C:plasma membrane"/>
    <property type="evidence" value="ECO:0007669"/>
    <property type="project" value="UniProtKB-SubCell"/>
</dbReference>
<dbReference type="GO" id="GO:0051539">
    <property type="term" value="F:4 iron, 4 sulfur cluster binding"/>
    <property type="evidence" value="ECO:0007669"/>
    <property type="project" value="UniProtKB-KW"/>
</dbReference>
<dbReference type="GO" id="GO:0005506">
    <property type="term" value="F:iron ion binding"/>
    <property type="evidence" value="ECO:0007669"/>
    <property type="project" value="UniProtKB-UniRule"/>
</dbReference>
<dbReference type="GO" id="GO:0050136">
    <property type="term" value="F:NADH:ubiquinone reductase (non-electrogenic) activity"/>
    <property type="evidence" value="ECO:0007669"/>
    <property type="project" value="UniProtKB-UniRule"/>
</dbReference>
<dbReference type="GO" id="GO:0048038">
    <property type="term" value="F:quinone binding"/>
    <property type="evidence" value="ECO:0007669"/>
    <property type="project" value="UniProtKB-KW"/>
</dbReference>
<dbReference type="GO" id="GO:0009060">
    <property type="term" value="P:aerobic respiration"/>
    <property type="evidence" value="ECO:0007669"/>
    <property type="project" value="TreeGrafter"/>
</dbReference>
<dbReference type="FunFam" id="3.30.70.3270:FF:000001">
    <property type="entry name" value="NADH-quinone oxidoreductase subunit I 1"/>
    <property type="match status" value="1"/>
</dbReference>
<dbReference type="Gene3D" id="3.30.70.3270">
    <property type="match status" value="1"/>
</dbReference>
<dbReference type="HAMAP" id="MF_01351">
    <property type="entry name" value="NDH1_NuoI"/>
    <property type="match status" value="1"/>
</dbReference>
<dbReference type="InterPro" id="IPR017896">
    <property type="entry name" value="4Fe4S_Fe-S-bd"/>
</dbReference>
<dbReference type="InterPro" id="IPR017900">
    <property type="entry name" value="4Fe4S_Fe_S_CS"/>
</dbReference>
<dbReference type="InterPro" id="IPR010226">
    <property type="entry name" value="NADH_quinone_OxRdtase_chainI"/>
</dbReference>
<dbReference type="NCBIfam" id="TIGR01971">
    <property type="entry name" value="NuoI"/>
    <property type="match status" value="1"/>
</dbReference>
<dbReference type="NCBIfam" id="NF004538">
    <property type="entry name" value="PRK05888.1-4"/>
    <property type="match status" value="1"/>
</dbReference>
<dbReference type="NCBIfam" id="NF004539">
    <property type="entry name" value="PRK05888.1-5"/>
    <property type="match status" value="1"/>
</dbReference>
<dbReference type="PANTHER" id="PTHR10849:SF20">
    <property type="entry name" value="NADH DEHYDROGENASE [UBIQUINONE] IRON-SULFUR PROTEIN 8, MITOCHONDRIAL"/>
    <property type="match status" value="1"/>
</dbReference>
<dbReference type="PANTHER" id="PTHR10849">
    <property type="entry name" value="NADH DEHYDROGENASE UBIQUINONE IRON-SULFUR PROTEIN 8, MITOCHONDRIAL"/>
    <property type="match status" value="1"/>
</dbReference>
<dbReference type="Pfam" id="PF12838">
    <property type="entry name" value="Fer4_7"/>
    <property type="match status" value="1"/>
</dbReference>
<dbReference type="SUPFAM" id="SSF54862">
    <property type="entry name" value="4Fe-4S ferredoxins"/>
    <property type="match status" value="1"/>
</dbReference>
<dbReference type="PROSITE" id="PS00198">
    <property type="entry name" value="4FE4S_FER_1"/>
    <property type="match status" value="2"/>
</dbReference>
<dbReference type="PROSITE" id="PS51379">
    <property type="entry name" value="4FE4S_FER_2"/>
    <property type="match status" value="2"/>
</dbReference>
<feature type="chain" id="PRO_0000298544" description="NADH-quinone oxidoreductase subunit I 2">
    <location>
        <begin position="1"/>
        <end position="162"/>
    </location>
</feature>
<feature type="domain" description="4Fe-4S ferredoxin-type 1" evidence="1">
    <location>
        <begin position="52"/>
        <end position="82"/>
    </location>
</feature>
<feature type="domain" description="4Fe-4S ferredoxin-type 2" evidence="1">
    <location>
        <begin position="93"/>
        <end position="122"/>
    </location>
</feature>
<feature type="binding site" evidence="1">
    <location>
        <position position="62"/>
    </location>
    <ligand>
        <name>[4Fe-4S] cluster</name>
        <dbReference type="ChEBI" id="CHEBI:49883"/>
        <label>1</label>
    </ligand>
</feature>
<feature type="binding site" evidence="1">
    <location>
        <position position="65"/>
    </location>
    <ligand>
        <name>[4Fe-4S] cluster</name>
        <dbReference type="ChEBI" id="CHEBI:49883"/>
        <label>1</label>
    </ligand>
</feature>
<feature type="binding site" evidence="1">
    <location>
        <position position="68"/>
    </location>
    <ligand>
        <name>[4Fe-4S] cluster</name>
        <dbReference type="ChEBI" id="CHEBI:49883"/>
        <label>1</label>
    </ligand>
</feature>
<feature type="binding site" evidence="1">
    <location>
        <position position="72"/>
    </location>
    <ligand>
        <name>[4Fe-4S] cluster</name>
        <dbReference type="ChEBI" id="CHEBI:49883"/>
        <label>2</label>
    </ligand>
</feature>
<feature type="binding site" evidence="1">
    <location>
        <position position="102"/>
    </location>
    <ligand>
        <name>[4Fe-4S] cluster</name>
        <dbReference type="ChEBI" id="CHEBI:49883"/>
        <label>2</label>
    </ligand>
</feature>
<feature type="binding site" evidence="1">
    <location>
        <position position="105"/>
    </location>
    <ligand>
        <name>[4Fe-4S] cluster</name>
        <dbReference type="ChEBI" id="CHEBI:49883"/>
        <label>2</label>
    </ligand>
</feature>
<feature type="binding site" evidence="1">
    <location>
        <position position="108"/>
    </location>
    <ligand>
        <name>[4Fe-4S] cluster</name>
        <dbReference type="ChEBI" id="CHEBI:49883"/>
        <label>2</label>
    </ligand>
</feature>
<feature type="binding site" evidence="1">
    <location>
        <position position="112"/>
    </location>
    <ligand>
        <name>[4Fe-4S] cluster</name>
        <dbReference type="ChEBI" id="CHEBI:49883"/>
        <label>1</label>
    </ligand>
</feature>
<accession>Q135Y4</accession>
<protein>
    <recommendedName>
        <fullName evidence="1">NADH-quinone oxidoreductase subunit I 2</fullName>
        <ecNumber evidence="1">7.1.1.-</ecNumber>
    </recommendedName>
    <alternativeName>
        <fullName evidence="1">NADH dehydrogenase I subunit I 2</fullName>
    </alternativeName>
    <alternativeName>
        <fullName evidence="1">NDH-1 subunit I 2</fullName>
    </alternativeName>
</protein>
<name>NUOI2_RHOPS</name>
<organism>
    <name type="scientific">Rhodopseudomonas palustris (strain BisB5)</name>
    <dbReference type="NCBI Taxonomy" id="316057"/>
    <lineage>
        <taxon>Bacteria</taxon>
        <taxon>Pseudomonadati</taxon>
        <taxon>Pseudomonadota</taxon>
        <taxon>Alphaproteobacteria</taxon>
        <taxon>Hyphomicrobiales</taxon>
        <taxon>Nitrobacteraceae</taxon>
        <taxon>Rhodopseudomonas</taxon>
    </lineage>
</organism>
<reference key="1">
    <citation type="submission" date="2006-03" db="EMBL/GenBank/DDBJ databases">
        <title>Complete sequence of Rhodopseudomonas palustris BisB5.</title>
        <authorList>
            <consortium name="US DOE Joint Genome Institute"/>
            <person name="Copeland A."/>
            <person name="Lucas S."/>
            <person name="Lapidus A."/>
            <person name="Barry K."/>
            <person name="Detter J.C."/>
            <person name="Glavina del Rio T."/>
            <person name="Hammon N."/>
            <person name="Israni S."/>
            <person name="Dalin E."/>
            <person name="Tice H."/>
            <person name="Pitluck S."/>
            <person name="Chain P."/>
            <person name="Malfatti S."/>
            <person name="Shin M."/>
            <person name="Vergez L."/>
            <person name="Schmutz J."/>
            <person name="Larimer F."/>
            <person name="Land M."/>
            <person name="Hauser L."/>
            <person name="Pelletier D.A."/>
            <person name="Kyrpides N."/>
            <person name="Lykidis A."/>
            <person name="Oda Y."/>
            <person name="Harwood C.S."/>
            <person name="Richardson P."/>
        </authorList>
    </citation>
    <scope>NUCLEOTIDE SEQUENCE [LARGE SCALE GENOMIC DNA]</scope>
    <source>
        <strain>BisB5</strain>
    </source>
</reference>
<keyword id="KW-0004">4Fe-4S</keyword>
<keyword id="KW-0997">Cell inner membrane</keyword>
<keyword id="KW-1003">Cell membrane</keyword>
<keyword id="KW-0408">Iron</keyword>
<keyword id="KW-0411">Iron-sulfur</keyword>
<keyword id="KW-0472">Membrane</keyword>
<keyword id="KW-0479">Metal-binding</keyword>
<keyword id="KW-0520">NAD</keyword>
<keyword id="KW-0874">Quinone</keyword>
<keyword id="KW-0677">Repeat</keyword>
<keyword id="KW-1278">Translocase</keyword>
<keyword id="KW-0830">Ubiquinone</keyword>
<proteinExistence type="inferred from homology"/>
<gene>
    <name evidence="1" type="primary">nuoI2</name>
    <name type="ordered locus">RPD_2877</name>
</gene>
<sequence length="162" mass="18743">MNINATARSLLLTEFVSAFFLAMRYFFRPKPTINYPFEKNPISPRFRGEHALRRYPNGEERCIACKLCEAICPAQAITIEAGPRRNDGTRRTVRYDIDMVKCIYCGLCQEACPVDAIVEGPNFEFATETREELYYDKARLLANGDRWEREIAKSIELDAPYR</sequence>
<comment type="function">
    <text evidence="1">NDH-1 shuttles electrons from NADH, via FMN and iron-sulfur (Fe-S) centers, to quinones in the respiratory chain. The immediate electron acceptor for the enzyme in this species is believed to be ubiquinone. Couples the redox reaction to proton translocation (for every two electrons transferred, four hydrogen ions are translocated across the cytoplasmic membrane), and thus conserves the redox energy in a proton gradient.</text>
</comment>
<comment type="catalytic activity">
    <reaction evidence="1">
        <text>a quinone + NADH + 5 H(+)(in) = a quinol + NAD(+) + 4 H(+)(out)</text>
        <dbReference type="Rhea" id="RHEA:57888"/>
        <dbReference type="ChEBI" id="CHEBI:15378"/>
        <dbReference type="ChEBI" id="CHEBI:24646"/>
        <dbReference type="ChEBI" id="CHEBI:57540"/>
        <dbReference type="ChEBI" id="CHEBI:57945"/>
        <dbReference type="ChEBI" id="CHEBI:132124"/>
    </reaction>
</comment>
<comment type="cofactor">
    <cofactor evidence="1">
        <name>[4Fe-4S] cluster</name>
        <dbReference type="ChEBI" id="CHEBI:49883"/>
    </cofactor>
    <text evidence="1">Binds 2 [4Fe-4S] clusters per subunit.</text>
</comment>
<comment type="subunit">
    <text evidence="1">NDH-1 is composed of 14 different subunits. Subunits NuoA, H, J, K, L, M, N constitute the membrane sector of the complex.</text>
</comment>
<comment type="subcellular location">
    <subcellularLocation>
        <location evidence="1">Cell inner membrane</location>
        <topology evidence="1">Peripheral membrane protein</topology>
    </subcellularLocation>
</comment>
<comment type="similarity">
    <text evidence="1">Belongs to the complex I 23 kDa subunit family.</text>
</comment>